<proteinExistence type="evidence at protein level"/>
<gene>
    <name type="primary">ZNF460</name>
    <name type="synonym">ZNF272</name>
</gene>
<accession>Q14592</accession>
<accession>A4FU64</accession>
<accession>B4DNX9</accession>
<accession>Q2VPC7</accession>
<accession>Q6VSF8</accession>
<dbReference type="EMBL" id="AY329492">
    <property type="protein sequence ID" value="AAR00225.1"/>
    <property type="molecule type" value="mRNA"/>
</dbReference>
<dbReference type="EMBL" id="AK298106">
    <property type="protein sequence ID" value="BAG60391.1"/>
    <property type="molecule type" value="mRNA"/>
</dbReference>
<dbReference type="EMBL" id="AC005261">
    <property type="status" value="NOT_ANNOTATED_CDS"/>
    <property type="molecule type" value="Genomic_DNA"/>
</dbReference>
<dbReference type="EMBL" id="BC109018">
    <property type="protein sequence ID" value="AAI09019.1"/>
    <property type="molecule type" value="mRNA"/>
</dbReference>
<dbReference type="EMBL" id="BC109019">
    <property type="protein sequence ID" value="AAI09020.1"/>
    <property type="molecule type" value="mRNA"/>
</dbReference>
<dbReference type="EMBL" id="BC118625">
    <property type="protein sequence ID" value="AAI18626.1"/>
    <property type="molecule type" value="mRNA"/>
</dbReference>
<dbReference type="EMBL" id="X78931">
    <property type="protein sequence ID" value="CAA55531.1"/>
    <property type="molecule type" value="mRNA"/>
</dbReference>
<dbReference type="CCDS" id="CCDS12949.1">
    <molecule id="Q14592-1"/>
</dbReference>
<dbReference type="CCDS" id="CCDS82404.1">
    <molecule id="Q14592-2"/>
</dbReference>
<dbReference type="PIR" id="S47069">
    <property type="entry name" value="S47069"/>
</dbReference>
<dbReference type="RefSeq" id="NP_001317551.1">
    <molecule id="Q14592-2"/>
    <property type="nucleotide sequence ID" value="NM_001330622.2"/>
</dbReference>
<dbReference type="RefSeq" id="NP_006626.3">
    <molecule id="Q14592-1"/>
    <property type="nucleotide sequence ID" value="NM_006635.3"/>
</dbReference>
<dbReference type="SMR" id="Q14592"/>
<dbReference type="BioGRID" id="116009">
    <property type="interactions" value="142"/>
</dbReference>
<dbReference type="FunCoup" id="Q14592">
    <property type="interactions" value="554"/>
</dbReference>
<dbReference type="IntAct" id="Q14592">
    <property type="interactions" value="135"/>
</dbReference>
<dbReference type="STRING" id="9606.ENSP00000353491"/>
<dbReference type="GlyGen" id="Q14592">
    <property type="glycosylation" value="1 site, 1 O-linked glycan (1 site)"/>
</dbReference>
<dbReference type="iPTMnet" id="Q14592"/>
<dbReference type="PhosphoSitePlus" id="Q14592"/>
<dbReference type="SwissPalm" id="Q14592"/>
<dbReference type="BioMuta" id="ZNF460"/>
<dbReference type="DMDM" id="85681860"/>
<dbReference type="jPOST" id="Q14592"/>
<dbReference type="MassIVE" id="Q14592"/>
<dbReference type="PaxDb" id="9606-ENSP00000353491"/>
<dbReference type="PeptideAtlas" id="Q14592"/>
<dbReference type="ProteomicsDB" id="4735"/>
<dbReference type="ProteomicsDB" id="60067">
    <molecule id="Q14592-1"/>
</dbReference>
<dbReference type="Pumba" id="Q14592"/>
<dbReference type="Antibodypedia" id="33241">
    <property type="antibodies" value="104 antibodies from 25 providers"/>
</dbReference>
<dbReference type="DNASU" id="10794"/>
<dbReference type="Ensembl" id="ENST00000360338.4">
    <molecule id="Q14592-1"/>
    <property type="protein sequence ID" value="ENSP00000353491.2"/>
    <property type="gene ID" value="ENSG00000197714.9"/>
</dbReference>
<dbReference type="Ensembl" id="ENST00000537645.5">
    <molecule id="Q14592-2"/>
    <property type="protein sequence ID" value="ENSP00000446167.1"/>
    <property type="gene ID" value="ENSG00000197714.9"/>
</dbReference>
<dbReference type="GeneID" id="10794"/>
<dbReference type="KEGG" id="hsa:10794"/>
<dbReference type="MANE-Select" id="ENST00000360338.4">
    <property type="protein sequence ID" value="ENSP00000353491.2"/>
    <property type="RefSeq nucleotide sequence ID" value="NM_006635.4"/>
    <property type="RefSeq protein sequence ID" value="NP_006626.3"/>
</dbReference>
<dbReference type="UCSC" id="uc002qog.3">
    <molecule id="Q14592-1"/>
    <property type="organism name" value="human"/>
</dbReference>
<dbReference type="AGR" id="HGNC:21628"/>
<dbReference type="CTD" id="10794"/>
<dbReference type="DisGeNET" id="10794"/>
<dbReference type="GeneCards" id="ZNF460"/>
<dbReference type="HGNC" id="HGNC:21628">
    <property type="gene designation" value="ZNF460"/>
</dbReference>
<dbReference type="HPA" id="ENSG00000197714">
    <property type="expression patterns" value="Low tissue specificity"/>
</dbReference>
<dbReference type="MIM" id="604755">
    <property type="type" value="gene"/>
</dbReference>
<dbReference type="neXtProt" id="NX_Q14592"/>
<dbReference type="OpenTargets" id="ENSG00000197714"/>
<dbReference type="PharmGKB" id="PA37642"/>
<dbReference type="VEuPathDB" id="HostDB:ENSG00000197714"/>
<dbReference type="eggNOG" id="KOG1721">
    <property type="taxonomic scope" value="Eukaryota"/>
</dbReference>
<dbReference type="GeneTree" id="ENSGT00950000182890"/>
<dbReference type="HOGENOM" id="CLU_002678_5_1_1"/>
<dbReference type="InParanoid" id="Q14592"/>
<dbReference type="OMA" id="AAWMAPT"/>
<dbReference type="OrthoDB" id="4748970at2759"/>
<dbReference type="PAN-GO" id="Q14592">
    <property type="GO annotations" value="3 GO annotations based on evolutionary models"/>
</dbReference>
<dbReference type="PhylomeDB" id="Q14592"/>
<dbReference type="TreeFam" id="TF340405"/>
<dbReference type="PathwayCommons" id="Q14592"/>
<dbReference type="Reactome" id="R-HSA-212436">
    <property type="pathway name" value="Generic Transcription Pathway"/>
</dbReference>
<dbReference type="SignaLink" id="Q14592"/>
<dbReference type="BioGRID-ORCS" id="10794">
    <property type="hits" value="12 hits in 1176 CRISPR screens"/>
</dbReference>
<dbReference type="GenomeRNAi" id="10794"/>
<dbReference type="Pharos" id="Q14592">
    <property type="development level" value="Tdark"/>
</dbReference>
<dbReference type="PRO" id="PR:Q14592"/>
<dbReference type="Proteomes" id="UP000005640">
    <property type="component" value="Chromosome 19"/>
</dbReference>
<dbReference type="RNAct" id="Q14592">
    <property type="molecule type" value="protein"/>
</dbReference>
<dbReference type="Bgee" id="ENSG00000197714">
    <property type="expression patterns" value="Expressed in adrenal tissue and 112 other cell types or tissues"/>
</dbReference>
<dbReference type="ExpressionAtlas" id="Q14592">
    <property type="expression patterns" value="baseline and differential"/>
</dbReference>
<dbReference type="GO" id="GO:0005634">
    <property type="term" value="C:nucleus"/>
    <property type="evidence" value="ECO:0007669"/>
    <property type="project" value="UniProtKB-SubCell"/>
</dbReference>
<dbReference type="GO" id="GO:0000981">
    <property type="term" value="F:DNA-binding transcription factor activity, RNA polymerase II-specific"/>
    <property type="evidence" value="ECO:0000318"/>
    <property type="project" value="GO_Central"/>
</dbReference>
<dbReference type="GO" id="GO:0000978">
    <property type="term" value="F:RNA polymerase II cis-regulatory region sequence-specific DNA binding"/>
    <property type="evidence" value="ECO:0000318"/>
    <property type="project" value="GO_Central"/>
</dbReference>
<dbReference type="GO" id="GO:1990837">
    <property type="term" value="F:sequence-specific double-stranded DNA binding"/>
    <property type="evidence" value="ECO:0000314"/>
    <property type="project" value="ARUK-UCL"/>
</dbReference>
<dbReference type="GO" id="GO:0008270">
    <property type="term" value="F:zinc ion binding"/>
    <property type="evidence" value="ECO:0007669"/>
    <property type="project" value="UniProtKB-KW"/>
</dbReference>
<dbReference type="GO" id="GO:0006355">
    <property type="term" value="P:regulation of DNA-templated transcription"/>
    <property type="evidence" value="ECO:0000318"/>
    <property type="project" value="GO_Central"/>
</dbReference>
<dbReference type="CDD" id="cd07765">
    <property type="entry name" value="KRAB_A-box"/>
    <property type="match status" value="1"/>
</dbReference>
<dbReference type="FunFam" id="3.30.160.60:FF:000478">
    <property type="entry name" value="Zinc finger protein 133"/>
    <property type="match status" value="1"/>
</dbReference>
<dbReference type="FunFam" id="3.30.160.60:FF:000794">
    <property type="entry name" value="zinc finger protein 2 isoform X2"/>
    <property type="match status" value="1"/>
</dbReference>
<dbReference type="FunFam" id="3.30.160.60:FF:001868">
    <property type="entry name" value="Zinc finger protein 264"/>
    <property type="match status" value="1"/>
</dbReference>
<dbReference type="FunFam" id="3.30.160.60:FF:000352">
    <property type="entry name" value="zinc finger protein 3 homolog"/>
    <property type="match status" value="1"/>
</dbReference>
<dbReference type="FunFam" id="3.30.160.60:FF:000184">
    <property type="entry name" value="Zinc finger protein 333"/>
    <property type="match status" value="1"/>
</dbReference>
<dbReference type="FunFam" id="3.30.160.60:FF:001291">
    <property type="entry name" value="Zinc finger protein 354C"/>
    <property type="match status" value="1"/>
</dbReference>
<dbReference type="FunFam" id="3.30.160.60:FF:000842">
    <property type="entry name" value="Zinc finger protein 383"/>
    <property type="match status" value="1"/>
</dbReference>
<dbReference type="FunFam" id="3.30.160.60:FF:001498">
    <property type="entry name" value="Zinc finger protein 404"/>
    <property type="match status" value="1"/>
</dbReference>
<dbReference type="FunFam" id="3.30.160.60:FF:001941">
    <property type="entry name" value="Zinc finger protein 460"/>
    <property type="match status" value="1"/>
</dbReference>
<dbReference type="FunFam" id="3.30.160.60:FF:001111">
    <property type="entry name" value="Zinc finger protein 92 homolog"/>
    <property type="match status" value="1"/>
</dbReference>
<dbReference type="FunFam" id="3.30.160.60:FF:000047">
    <property type="entry name" value="zinc finger protein OZF"/>
    <property type="match status" value="1"/>
</dbReference>
<dbReference type="Gene3D" id="6.10.140.140">
    <property type="match status" value="1"/>
</dbReference>
<dbReference type="Gene3D" id="3.30.160.60">
    <property type="entry name" value="Classic Zinc Finger"/>
    <property type="match status" value="11"/>
</dbReference>
<dbReference type="InterPro" id="IPR001909">
    <property type="entry name" value="KRAB"/>
</dbReference>
<dbReference type="InterPro" id="IPR036051">
    <property type="entry name" value="KRAB_dom_sf"/>
</dbReference>
<dbReference type="InterPro" id="IPR050331">
    <property type="entry name" value="Zinc_finger"/>
</dbReference>
<dbReference type="InterPro" id="IPR036236">
    <property type="entry name" value="Znf_C2H2_sf"/>
</dbReference>
<dbReference type="InterPro" id="IPR013087">
    <property type="entry name" value="Znf_C2H2_type"/>
</dbReference>
<dbReference type="PANTHER" id="PTHR16515">
    <property type="entry name" value="PR DOMAIN ZINC FINGER PROTEIN"/>
    <property type="match status" value="1"/>
</dbReference>
<dbReference type="PANTHER" id="PTHR16515:SF57">
    <property type="entry name" value="ZINC FINGER PROTEIN 154-LIKE"/>
    <property type="match status" value="1"/>
</dbReference>
<dbReference type="Pfam" id="PF01352">
    <property type="entry name" value="KRAB"/>
    <property type="match status" value="1"/>
</dbReference>
<dbReference type="Pfam" id="PF00096">
    <property type="entry name" value="zf-C2H2"/>
    <property type="match status" value="9"/>
</dbReference>
<dbReference type="SMART" id="SM00349">
    <property type="entry name" value="KRAB"/>
    <property type="match status" value="1"/>
</dbReference>
<dbReference type="SMART" id="SM00355">
    <property type="entry name" value="ZnF_C2H2"/>
    <property type="match status" value="11"/>
</dbReference>
<dbReference type="SUPFAM" id="SSF57667">
    <property type="entry name" value="beta-beta-alpha zinc fingers"/>
    <property type="match status" value="7"/>
</dbReference>
<dbReference type="SUPFAM" id="SSF109640">
    <property type="entry name" value="KRAB domain (Kruppel-associated box)"/>
    <property type="match status" value="1"/>
</dbReference>
<dbReference type="PROSITE" id="PS50805">
    <property type="entry name" value="KRAB"/>
    <property type="match status" value="1"/>
</dbReference>
<dbReference type="PROSITE" id="PS00028">
    <property type="entry name" value="ZINC_FINGER_C2H2_1"/>
    <property type="match status" value="11"/>
</dbReference>
<dbReference type="PROSITE" id="PS50157">
    <property type="entry name" value="ZINC_FINGER_C2H2_2"/>
    <property type="match status" value="11"/>
</dbReference>
<evidence type="ECO:0000255" key="1">
    <source>
        <dbReference type="PROSITE-ProRule" id="PRU00042"/>
    </source>
</evidence>
<evidence type="ECO:0000255" key="2">
    <source>
        <dbReference type="PROSITE-ProRule" id="PRU00119"/>
    </source>
</evidence>
<evidence type="ECO:0000269" key="3">
    <source>
    </source>
</evidence>
<evidence type="ECO:0000303" key="4">
    <source>
    </source>
</evidence>
<evidence type="ECO:0000305" key="5"/>
<evidence type="ECO:0007744" key="6">
    <source>
    </source>
</evidence>
<evidence type="ECO:0007744" key="7">
    <source>
    </source>
</evidence>
<evidence type="ECO:0007744" key="8">
    <source>
    </source>
</evidence>
<evidence type="ECO:0007744" key="9">
    <source>
    </source>
</evidence>
<organism>
    <name type="scientific">Homo sapiens</name>
    <name type="common">Human</name>
    <dbReference type="NCBI Taxonomy" id="9606"/>
    <lineage>
        <taxon>Eukaryota</taxon>
        <taxon>Metazoa</taxon>
        <taxon>Chordata</taxon>
        <taxon>Craniata</taxon>
        <taxon>Vertebrata</taxon>
        <taxon>Euteleostomi</taxon>
        <taxon>Mammalia</taxon>
        <taxon>Eutheria</taxon>
        <taxon>Euarchontoglires</taxon>
        <taxon>Primates</taxon>
        <taxon>Haplorrhini</taxon>
        <taxon>Catarrhini</taxon>
        <taxon>Hominidae</taxon>
        <taxon>Homo</taxon>
    </lineage>
</organism>
<keyword id="KW-0025">Alternative splicing</keyword>
<keyword id="KW-0238">DNA-binding</keyword>
<keyword id="KW-1017">Isopeptide bond</keyword>
<keyword id="KW-0479">Metal-binding</keyword>
<keyword id="KW-0539">Nucleus</keyword>
<keyword id="KW-1267">Proteomics identification</keyword>
<keyword id="KW-1185">Reference proteome</keyword>
<keyword id="KW-0677">Repeat</keyword>
<keyword id="KW-0804">Transcription</keyword>
<keyword id="KW-0805">Transcription regulation</keyword>
<keyword id="KW-0832">Ubl conjugation</keyword>
<keyword id="KW-0862">Zinc</keyword>
<keyword id="KW-0863">Zinc-finger</keyword>
<comment type="function">
    <text>May be involved in transcriptional regulation.</text>
</comment>
<comment type="interaction">
    <interactant intactId="EBI-2555738">
        <id>Q14592</id>
    </interactant>
    <interactant intactId="EBI-748597">
        <id>Q05D60</id>
        <label>DEUP1</label>
    </interactant>
    <organismsDiffer>false</organismsDiffer>
    <experiments>3</experiments>
</comment>
<comment type="interaction">
    <interactant intactId="EBI-2555738">
        <id>Q14592</id>
    </interactant>
    <interactant intactId="EBI-10976677">
        <id>G5E9A7</id>
        <label>DMWD</label>
    </interactant>
    <organismsDiffer>false</organismsDiffer>
    <experiments>3</experiments>
</comment>
<comment type="interaction">
    <interactant intactId="EBI-2555738">
        <id>Q14592</id>
    </interactant>
    <interactant intactId="EBI-6657662">
        <id>P61328</id>
        <label>FGF12</label>
    </interactant>
    <organismsDiffer>false</organismsDiffer>
    <experiments>3</experiments>
</comment>
<comment type="interaction">
    <interactant intactId="EBI-2555738">
        <id>Q14592</id>
    </interactant>
    <interactant intactId="EBI-8639312">
        <id>P25800</id>
        <label>LMO1</label>
    </interactant>
    <organismsDiffer>false</organismsDiffer>
    <experiments>3</experiments>
</comment>
<comment type="interaction">
    <interactant intactId="EBI-2555738">
        <id>Q14592</id>
    </interactant>
    <interactant intactId="EBI-5235340">
        <id>Q7Z699</id>
        <label>SPRED1</label>
    </interactant>
    <organismsDiffer>false</organismsDiffer>
    <experiments>3</experiments>
</comment>
<comment type="interaction">
    <interactant intactId="EBI-2555738">
        <id>Q14592</id>
    </interactant>
    <interactant intactId="EBI-725997">
        <id>Q8WV44</id>
        <label>TRIM41</label>
    </interactant>
    <organismsDiffer>false</organismsDiffer>
    <experiments>5</experiments>
</comment>
<comment type="interaction">
    <interactant intactId="EBI-2555738">
        <id>Q14592</id>
    </interactant>
    <interactant intactId="EBI-10177272">
        <id>P15622-3</id>
        <label>ZNF250</label>
    </interactant>
    <organismsDiffer>false</organismsDiffer>
    <experiments>3</experiments>
</comment>
<comment type="interaction">
    <interactant intactId="EBI-2555738">
        <id>Q14592</id>
    </interactant>
    <interactant intactId="EBI-373456">
        <id>Q9Y3S2</id>
        <label>ZNF330</label>
    </interactant>
    <organismsDiffer>false</organismsDiffer>
    <experiments>3</experiments>
</comment>
<comment type="subcellular location">
    <subcellularLocation>
        <location evidence="5">Nucleus</location>
    </subcellularLocation>
</comment>
<comment type="alternative products">
    <event type="alternative splicing"/>
    <isoform>
        <id>Q14592-1</id>
        <name>1</name>
        <sequence type="displayed"/>
    </isoform>
    <isoform>
        <id>Q14592-2</id>
        <name>2</name>
        <sequence type="described" ref="VSP_055954"/>
    </isoform>
</comment>
<comment type="tissue specificity">
    <text evidence="3">Ubiquitously expressed at low levels. Highest levels are found in pancreas and liver.</text>
</comment>
<comment type="similarity">
    <text evidence="5">Belongs to the krueppel C2H2-type zinc-finger protein family.</text>
</comment>
<protein>
    <recommendedName>
        <fullName>Zinc finger protein 460</fullName>
    </recommendedName>
    <alternativeName>
        <fullName>Zinc finger protein 272</fullName>
    </alternativeName>
    <alternativeName>
        <fullName>Zinc finger protein HZF8</fullName>
    </alternativeName>
</protein>
<name>ZN460_HUMAN</name>
<reference key="1">
    <citation type="journal article" date="2003" name="Cytogenet. Genome Res.">
        <title>Characterization of two novel KRAB-domain-containing zinc finger genes, ZNF460 and ZNF461, on human chromosome 19q13.1-q13.4.</title>
        <authorList>
            <person name="Dai J."/>
            <person name="Li Y."/>
            <person name="Ji C."/>
            <person name="Jin F."/>
            <person name="Zheng Z."/>
            <person name="Wang X."/>
            <person name="Sun X."/>
            <person name="Xu X."/>
            <person name="Gu S."/>
            <person name="Xie Y."/>
            <person name="Mao Y."/>
        </authorList>
    </citation>
    <scope>NUCLEOTIDE SEQUENCE [MRNA] (ISOFORM 1)</scope>
    <scope>TISSUE SPECIFICITY</scope>
    <source>
        <tissue>Fetal brain</tissue>
    </source>
</reference>
<reference key="2">
    <citation type="journal article" date="2004" name="Nat. Genet.">
        <title>Complete sequencing and characterization of 21,243 full-length human cDNAs.</title>
        <authorList>
            <person name="Ota T."/>
            <person name="Suzuki Y."/>
            <person name="Nishikawa T."/>
            <person name="Otsuki T."/>
            <person name="Sugiyama T."/>
            <person name="Irie R."/>
            <person name="Wakamatsu A."/>
            <person name="Hayashi K."/>
            <person name="Sato H."/>
            <person name="Nagai K."/>
            <person name="Kimura K."/>
            <person name="Makita H."/>
            <person name="Sekine M."/>
            <person name="Obayashi M."/>
            <person name="Nishi T."/>
            <person name="Shibahara T."/>
            <person name="Tanaka T."/>
            <person name="Ishii S."/>
            <person name="Yamamoto J."/>
            <person name="Saito K."/>
            <person name="Kawai Y."/>
            <person name="Isono Y."/>
            <person name="Nakamura Y."/>
            <person name="Nagahari K."/>
            <person name="Murakami K."/>
            <person name="Yasuda T."/>
            <person name="Iwayanagi T."/>
            <person name="Wagatsuma M."/>
            <person name="Shiratori A."/>
            <person name="Sudo H."/>
            <person name="Hosoiri T."/>
            <person name="Kaku Y."/>
            <person name="Kodaira H."/>
            <person name="Kondo H."/>
            <person name="Sugawara M."/>
            <person name="Takahashi M."/>
            <person name="Kanda K."/>
            <person name="Yokoi T."/>
            <person name="Furuya T."/>
            <person name="Kikkawa E."/>
            <person name="Omura Y."/>
            <person name="Abe K."/>
            <person name="Kamihara K."/>
            <person name="Katsuta N."/>
            <person name="Sato K."/>
            <person name="Tanikawa M."/>
            <person name="Yamazaki M."/>
            <person name="Ninomiya K."/>
            <person name="Ishibashi T."/>
            <person name="Yamashita H."/>
            <person name="Murakawa K."/>
            <person name="Fujimori K."/>
            <person name="Tanai H."/>
            <person name="Kimata M."/>
            <person name="Watanabe M."/>
            <person name="Hiraoka S."/>
            <person name="Chiba Y."/>
            <person name="Ishida S."/>
            <person name="Ono Y."/>
            <person name="Takiguchi S."/>
            <person name="Watanabe S."/>
            <person name="Yosida M."/>
            <person name="Hotuta T."/>
            <person name="Kusano J."/>
            <person name="Kanehori K."/>
            <person name="Takahashi-Fujii A."/>
            <person name="Hara H."/>
            <person name="Tanase T.-O."/>
            <person name="Nomura Y."/>
            <person name="Togiya S."/>
            <person name="Komai F."/>
            <person name="Hara R."/>
            <person name="Takeuchi K."/>
            <person name="Arita M."/>
            <person name="Imose N."/>
            <person name="Musashino K."/>
            <person name="Yuuki H."/>
            <person name="Oshima A."/>
            <person name="Sasaki N."/>
            <person name="Aotsuka S."/>
            <person name="Yoshikawa Y."/>
            <person name="Matsunawa H."/>
            <person name="Ichihara T."/>
            <person name="Shiohata N."/>
            <person name="Sano S."/>
            <person name="Moriya S."/>
            <person name="Momiyama H."/>
            <person name="Satoh N."/>
            <person name="Takami S."/>
            <person name="Terashima Y."/>
            <person name="Suzuki O."/>
            <person name="Nakagawa S."/>
            <person name="Senoh A."/>
            <person name="Mizoguchi H."/>
            <person name="Goto Y."/>
            <person name="Shimizu F."/>
            <person name="Wakebe H."/>
            <person name="Hishigaki H."/>
            <person name="Watanabe T."/>
            <person name="Sugiyama A."/>
            <person name="Takemoto M."/>
            <person name="Kawakami B."/>
            <person name="Yamazaki M."/>
            <person name="Watanabe K."/>
            <person name="Kumagai A."/>
            <person name="Itakura S."/>
            <person name="Fukuzumi Y."/>
            <person name="Fujimori Y."/>
            <person name="Komiyama M."/>
            <person name="Tashiro H."/>
            <person name="Tanigami A."/>
            <person name="Fujiwara T."/>
            <person name="Ono T."/>
            <person name="Yamada K."/>
            <person name="Fujii Y."/>
            <person name="Ozaki K."/>
            <person name="Hirao M."/>
            <person name="Ohmori Y."/>
            <person name="Kawabata A."/>
            <person name="Hikiji T."/>
            <person name="Kobatake N."/>
            <person name="Inagaki H."/>
            <person name="Ikema Y."/>
            <person name="Okamoto S."/>
            <person name="Okitani R."/>
            <person name="Kawakami T."/>
            <person name="Noguchi S."/>
            <person name="Itoh T."/>
            <person name="Shigeta K."/>
            <person name="Senba T."/>
            <person name="Matsumura K."/>
            <person name="Nakajima Y."/>
            <person name="Mizuno T."/>
            <person name="Morinaga M."/>
            <person name="Sasaki M."/>
            <person name="Togashi T."/>
            <person name="Oyama M."/>
            <person name="Hata H."/>
            <person name="Watanabe M."/>
            <person name="Komatsu T."/>
            <person name="Mizushima-Sugano J."/>
            <person name="Satoh T."/>
            <person name="Shirai Y."/>
            <person name="Takahashi Y."/>
            <person name="Nakagawa K."/>
            <person name="Okumura K."/>
            <person name="Nagase T."/>
            <person name="Nomura N."/>
            <person name="Kikuchi H."/>
            <person name="Masuho Y."/>
            <person name="Yamashita R."/>
            <person name="Nakai K."/>
            <person name="Yada T."/>
            <person name="Nakamura Y."/>
            <person name="Ohara O."/>
            <person name="Isogai T."/>
            <person name="Sugano S."/>
        </authorList>
    </citation>
    <scope>NUCLEOTIDE SEQUENCE [LARGE SCALE MRNA] (ISOFORM 2)</scope>
    <source>
        <tissue>Lung</tissue>
    </source>
</reference>
<reference key="3">
    <citation type="journal article" date="2004" name="Nature">
        <title>The DNA sequence and biology of human chromosome 19.</title>
        <authorList>
            <person name="Grimwood J."/>
            <person name="Gordon L.A."/>
            <person name="Olsen A.S."/>
            <person name="Terry A."/>
            <person name="Schmutz J."/>
            <person name="Lamerdin J.E."/>
            <person name="Hellsten U."/>
            <person name="Goodstein D."/>
            <person name="Couronne O."/>
            <person name="Tran-Gyamfi M."/>
            <person name="Aerts A."/>
            <person name="Altherr M."/>
            <person name="Ashworth L."/>
            <person name="Bajorek E."/>
            <person name="Black S."/>
            <person name="Branscomb E."/>
            <person name="Caenepeel S."/>
            <person name="Carrano A.V."/>
            <person name="Caoile C."/>
            <person name="Chan Y.M."/>
            <person name="Christensen M."/>
            <person name="Cleland C.A."/>
            <person name="Copeland A."/>
            <person name="Dalin E."/>
            <person name="Dehal P."/>
            <person name="Denys M."/>
            <person name="Detter J.C."/>
            <person name="Escobar J."/>
            <person name="Flowers D."/>
            <person name="Fotopulos D."/>
            <person name="Garcia C."/>
            <person name="Georgescu A.M."/>
            <person name="Glavina T."/>
            <person name="Gomez M."/>
            <person name="Gonzales E."/>
            <person name="Groza M."/>
            <person name="Hammon N."/>
            <person name="Hawkins T."/>
            <person name="Haydu L."/>
            <person name="Ho I."/>
            <person name="Huang W."/>
            <person name="Israni S."/>
            <person name="Jett J."/>
            <person name="Kadner K."/>
            <person name="Kimball H."/>
            <person name="Kobayashi A."/>
            <person name="Larionov V."/>
            <person name="Leem S.-H."/>
            <person name="Lopez F."/>
            <person name="Lou Y."/>
            <person name="Lowry S."/>
            <person name="Malfatti S."/>
            <person name="Martinez D."/>
            <person name="McCready P.M."/>
            <person name="Medina C."/>
            <person name="Morgan J."/>
            <person name="Nelson K."/>
            <person name="Nolan M."/>
            <person name="Ovcharenko I."/>
            <person name="Pitluck S."/>
            <person name="Pollard M."/>
            <person name="Popkie A.P."/>
            <person name="Predki P."/>
            <person name="Quan G."/>
            <person name="Ramirez L."/>
            <person name="Rash S."/>
            <person name="Retterer J."/>
            <person name="Rodriguez A."/>
            <person name="Rogers S."/>
            <person name="Salamov A."/>
            <person name="Salazar A."/>
            <person name="She X."/>
            <person name="Smith D."/>
            <person name="Slezak T."/>
            <person name="Solovyev V."/>
            <person name="Thayer N."/>
            <person name="Tice H."/>
            <person name="Tsai M."/>
            <person name="Ustaszewska A."/>
            <person name="Vo N."/>
            <person name="Wagner M."/>
            <person name="Wheeler J."/>
            <person name="Wu K."/>
            <person name="Xie G."/>
            <person name="Yang J."/>
            <person name="Dubchak I."/>
            <person name="Furey T.S."/>
            <person name="DeJong P."/>
            <person name="Dickson M."/>
            <person name="Gordon D."/>
            <person name="Eichler E.E."/>
            <person name="Pennacchio L.A."/>
            <person name="Richardson P."/>
            <person name="Stubbs L."/>
            <person name="Rokhsar D.S."/>
            <person name="Myers R.M."/>
            <person name="Rubin E.M."/>
            <person name="Lucas S.M."/>
        </authorList>
    </citation>
    <scope>NUCLEOTIDE SEQUENCE [LARGE SCALE GENOMIC DNA]</scope>
</reference>
<reference key="4">
    <citation type="journal article" date="2004" name="Genome Res.">
        <title>The status, quality, and expansion of the NIH full-length cDNA project: the Mammalian Gene Collection (MGC).</title>
        <authorList>
            <consortium name="The MGC Project Team"/>
        </authorList>
    </citation>
    <scope>NUCLEOTIDE SEQUENCE [LARGE SCALE MRNA] (ISOFORM 1)</scope>
</reference>
<reference key="5">
    <citation type="journal article" date="1995" name="DNA Cell Biol.">
        <title>Isolation of cDNA clones for 42 different Kruppel-related zinc finger proteins expressed in the human monoblast cell line U-937.</title>
        <authorList>
            <person name="Abrink M."/>
            <person name="Aveskogh M."/>
            <person name="Hellman L."/>
        </authorList>
    </citation>
    <scope>NUCLEOTIDE SEQUENCE [MRNA] OF 389-562 (ISOFORM 1)</scope>
</reference>
<reference key="6">
    <citation type="journal article" date="2008" name="Proc. Natl. Acad. Sci. U.S.A.">
        <title>A quantitative atlas of mitotic phosphorylation.</title>
        <authorList>
            <person name="Dephoure N."/>
            <person name="Zhou C."/>
            <person name="Villen J."/>
            <person name="Beausoleil S.A."/>
            <person name="Bakalarski C.E."/>
            <person name="Elledge S.J."/>
            <person name="Gygi S.P."/>
        </authorList>
    </citation>
    <scope>IDENTIFICATION BY MASS SPECTROMETRY [LARGE SCALE ANALYSIS]</scope>
    <source>
        <tissue>Cervix carcinoma</tissue>
    </source>
</reference>
<reference key="7">
    <citation type="journal article" date="2014" name="Nat. Struct. Mol. Biol.">
        <title>Uncovering global SUMOylation signaling networks in a site-specific manner.</title>
        <authorList>
            <person name="Hendriks I.A."/>
            <person name="D'Souza R.C."/>
            <person name="Yang B."/>
            <person name="Verlaan-de Vries M."/>
            <person name="Mann M."/>
            <person name="Vertegaal A.C."/>
        </authorList>
    </citation>
    <scope>SUMOYLATION [LARGE SCALE ANALYSIS] AT LYS-194; LYS-209; LYS-278; LYS-306 AND LYS-362</scope>
    <scope>IDENTIFICATION BY MASS SPECTROMETRY [LARGE SCALE ANALYSIS]</scope>
</reference>
<reference key="8">
    <citation type="journal article" date="2015" name="Cell Rep.">
        <title>SUMO-2 orchestrates chromatin modifiers in response to DNA damage.</title>
        <authorList>
            <person name="Hendriks I.A."/>
            <person name="Treffers L.W."/>
            <person name="Verlaan-de Vries M."/>
            <person name="Olsen J.V."/>
            <person name="Vertegaal A.C."/>
        </authorList>
    </citation>
    <scope>SUMOYLATION [LARGE SCALE ANALYSIS] AT LYS-362</scope>
    <scope>IDENTIFICATION BY MASS SPECTROMETRY [LARGE SCALE ANALYSIS]</scope>
</reference>
<reference key="9">
    <citation type="journal article" date="2015" name="Mol. Cell. Proteomics">
        <title>System-wide analysis of SUMOylation dynamics in response to replication stress reveals novel small ubiquitin-like modified target proteins and acceptor lysines relevant for genome stability.</title>
        <authorList>
            <person name="Xiao Z."/>
            <person name="Chang J.G."/>
            <person name="Hendriks I.A."/>
            <person name="Sigurdsson J.O."/>
            <person name="Olsen J.V."/>
            <person name="Vertegaal A.C."/>
        </authorList>
    </citation>
    <scope>SUMOYLATION [LARGE SCALE ANALYSIS] AT LYS-278; LYS-306 AND LYS-362</scope>
    <scope>IDENTIFICATION BY MASS SPECTROMETRY [LARGE SCALE ANALYSIS]</scope>
</reference>
<reference key="10">
    <citation type="journal article" date="2017" name="Nat. Struct. Mol. Biol.">
        <title>Site-specific mapping of the human SUMO proteome reveals co-modification with phosphorylation.</title>
        <authorList>
            <person name="Hendriks I.A."/>
            <person name="Lyon D."/>
            <person name="Young C."/>
            <person name="Jensen L.J."/>
            <person name="Vertegaal A.C."/>
            <person name="Nielsen M.L."/>
        </authorList>
    </citation>
    <scope>SUMOYLATION [LARGE SCALE ANALYSIS] AT LYS-117; LYS-194; LYS-203; LYS-207; LYS-209; LYS-250; LYS-278; LYS-287; LYS-300; LYS-305; LYS-306; LYS-362; LYS-371; LYS-446 AND LYS-455</scope>
    <scope>IDENTIFICATION BY MASS SPECTROMETRY [LARGE SCALE ANALYSIS]</scope>
</reference>
<feature type="chain" id="PRO_0000047499" description="Zinc finger protein 460">
    <location>
        <begin position="1"/>
        <end position="562"/>
    </location>
</feature>
<feature type="domain" description="KRAB" evidence="2">
    <location>
        <begin position="13"/>
        <end position="99"/>
    </location>
</feature>
<feature type="zinc finger region" description="C2H2-type 1" evidence="1">
    <location>
        <begin position="196"/>
        <end position="218"/>
    </location>
</feature>
<feature type="zinc finger region" description="C2H2-type 2" evidence="1">
    <location>
        <begin position="224"/>
        <end position="246"/>
    </location>
</feature>
<feature type="zinc finger region" description="C2H2-type 3" evidence="1">
    <location>
        <begin position="252"/>
        <end position="274"/>
    </location>
</feature>
<feature type="zinc finger region" description="C2H2-type 4" evidence="1">
    <location>
        <begin position="280"/>
        <end position="302"/>
    </location>
</feature>
<feature type="zinc finger region" description="C2H2-type 5" evidence="1">
    <location>
        <begin position="308"/>
        <end position="330"/>
    </location>
</feature>
<feature type="zinc finger region" description="C2H2-type 6" evidence="1">
    <location>
        <begin position="336"/>
        <end position="358"/>
    </location>
</feature>
<feature type="zinc finger region" description="C2H2-type 7" evidence="1">
    <location>
        <begin position="364"/>
        <end position="386"/>
    </location>
</feature>
<feature type="zinc finger region" description="C2H2-type 8" evidence="1">
    <location>
        <begin position="392"/>
        <end position="414"/>
    </location>
</feature>
<feature type="zinc finger region" description="C2H2-type 9" evidence="1">
    <location>
        <begin position="420"/>
        <end position="442"/>
    </location>
</feature>
<feature type="zinc finger region" description="C2H2-type 10" evidence="1">
    <location>
        <begin position="448"/>
        <end position="470"/>
    </location>
</feature>
<feature type="zinc finger region" description="C2H2-type 11" evidence="1">
    <location>
        <begin position="476"/>
        <end position="498"/>
    </location>
</feature>
<feature type="cross-link" description="Glycyl lysine isopeptide (Lys-Gly) (interchain with G-Cter in SUMO2)" evidence="9">
    <location>
        <position position="117"/>
    </location>
</feature>
<feature type="cross-link" description="Glycyl lysine isopeptide (Lys-Gly) (interchain with G-Cter in SUMO2)" evidence="6 9">
    <location>
        <position position="194"/>
    </location>
</feature>
<feature type="cross-link" description="Glycyl lysine isopeptide (Lys-Gly) (interchain with G-Cter in SUMO2)" evidence="9">
    <location>
        <position position="203"/>
    </location>
</feature>
<feature type="cross-link" description="Glycyl lysine isopeptide (Lys-Gly) (interchain with G-Cter in SUMO2)" evidence="9">
    <location>
        <position position="207"/>
    </location>
</feature>
<feature type="cross-link" description="Glycyl lysine isopeptide (Lys-Gly) (interchain with G-Cter in SUMO2)" evidence="6 9">
    <location>
        <position position="209"/>
    </location>
</feature>
<feature type="cross-link" description="Glycyl lysine isopeptide (Lys-Gly) (interchain with G-Cter in SUMO2)" evidence="9">
    <location>
        <position position="250"/>
    </location>
</feature>
<feature type="cross-link" description="Glycyl lysine isopeptide (Lys-Gly) (interchain with G-Cter in SUMO2)" evidence="6 7 9">
    <location>
        <position position="278"/>
    </location>
</feature>
<feature type="cross-link" description="Glycyl lysine isopeptide (Lys-Gly) (interchain with G-Cter in SUMO2)" evidence="9">
    <location>
        <position position="287"/>
    </location>
</feature>
<feature type="cross-link" description="Glycyl lysine isopeptide (Lys-Gly) (interchain with G-Cter in SUMO2)" evidence="9">
    <location>
        <position position="300"/>
    </location>
</feature>
<feature type="cross-link" description="Glycyl lysine isopeptide (Lys-Gly) (interchain with G-Cter in SUMO2)" evidence="9">
    <location>
        <position position="305"/>
    </location>
</feature>
<feature type="cross-link" description="Glycyl lysine isopeptide (Lys-Gly) (interchain with G-Cter in SUMO2)" evidence="6 7 9">
    <location>
        <position position="306"/>
    </location>
</feature>
<feature type="cross-link" description="Glycyl lysine isopeptide (Lys-Gly) (interchain with G-Cter in SUMO2)" evidence="6 7 8 9">
    <location>
        <position position="362"/>
    </location>
</feature>
<feature type="cross-link" description="Glycyl lysine isopeptide (Lys-Gly) (interchain with G-Cter in SUMO2)" evidence="9">
    <location>
        <position position="371"/>
    </location>
</feature>
<feature type="cross-link" description="Glycyl lysine isopeptide (Lys-Gly) (interchain with G-Cter in SUMO2)" evidence="9">
    <location>
        <position position="446"/>
    </location>
</feature>
<feature type="cross-link" description="Glycyl lysine isopeptide (Lys-Gly) (interchain with G-Cter in SUMO2)" evidence="9">
    <location>
        <position position="455"/>
    </location>
</feature>
<feature type="splice variant" id="VSP_055954" description="In isoform 2." evidence="4">
    <location>
        <begin position="1"/>
        <end position="41"/>
    </location>
</feature>
<feature type="sequence conflict" description="In Ref. 1; AAR00225." evidence="5" ref="1">
    <original>I</original>
    <variation>T</variation>
    <location>
        <position position="451"/>
    </location>
</feature>
<sequence>MAAAWMAPAQESVTFEDVAVTFTQEEWGQLDVTQRALYVEVMLETCGLLVALGDSTKPETVEPIPSHLALPEEVSLQEQLAQGVPRYSYLGQAMDQDGPSEMQEYFLRPGTDPQSEKLHGKMSLEHEGLATADGICSMMIQNQVSPEDALYGFDSYGPVTDSLIHEGENSYKFEEMFNENCFLVQHEQILPRVKPYDCPECGKAFGKSKHLLQHHIIHTGEKPYKCLECGKDFNRRSHLTRHQRTHNGDKPFVCSECGRTFNRGSHLTRHQRVHSGEKPFVCNECGKAFTYRSNFVLHNKSHNEKKPFACSECGKGFYESTALIQHFIIHTGERPFKCLECGKAFNCRSHLKQHERIHTGEKPFVCSQCGKAFTHYSTYVLHERAHTGEKPFECKECGKAFSIRKDLIRHFNIHTGEKPYECLQCGKAFTRMSGLTRHQWIHTGEKPYVCIQCGKAFCRTTNLIRHFSIHTGEKPYECVECGKAFNRRSPLTRHQRIHTAEKSHEPIQSGNVSCESTDLIQHSIIHTESSPVSAVNMETPSIAAHSSSLDINGFIVEETLPL</sequence>